<gene>
    <name evidence="1" type="primary">mdh</name>
    <name type="ordered locus">BcerKBAB4_4422</name>
</gene>
<sequence length="312" mass="33528">MTIKRKKVSVIGAGFTGATTAFLLAQKELADVVLVDIPQLENPTKGKALDMLEASPVQGFDANIIGTSDYADTADSDVVVITAGIARKPGMSRDDLVATNSKIMKSITRDIAKHSPNAIILVLTNPVDAMTYSVFKEAGFPKERVIGQSGVLDTARFRTFISQELNLSVKDITGFVLGGHGDDMVPLVRYSYAGGIPLETLIPKERLEAIVERTRKGGGEIVGLLGNGSAYYAPAASLVEMTEAILKDQRRVLPAIAYLEGEYGYSDLYLGVPVILGGNGIEKIIELELLADEKEALDRSVESVRNVMKVLV</sequence>
<name>MDH_BACMK</name>
<dbReference type="EC" id="1.1.1.37" evidence="1"/>
<dbReference type="EMBL" id="CP000903">
    <property type="protein sequence ID" value="ABY45581.1"/>
    <property type="molecule type" value="Genomic_DNA"/>
</dbReference>
<dbReference type="RefSeq" id="WP_002034284.1">
    <property type="nucleotide sequence ID" value="NC_010184.1"/>
</dbReference>
<dbReference type="SMR" id="A9VJQ4"/>
<dbReference type="GeneID" id="66265852"/>
<dbReference type="KEGG" id="bwe:BcerKBAB4_4422"/>
<dbReference type="eggNOG" id="COG0039">
    <property type="taxonomic scope" value="Bacteria"/>
</dbReference>
<dbReference type="HOGENOM" id="CLU_045401_2_1_9"/>
<dbReference type="Proteomes" id="UP000002154">
    <property type="component" value="Chromosome"/>
</dbReference>
<dbReference type="GO" id="GO:0004459">
    <property type="term" value="F:L-lactate dehydrogenase activity"/>
    <property type="evidence" value="ECO:0007669"/>
    <property type="project" value="TreeGrafter"/>
</dbReference>
<dbReference type="GO" id="GO:0030060">
    <property type="term" value="F:L-malate dehydrogenase (NAD+) activity"/>
    <property type="evidence" value="ECO:0007669"/>
    <property type="project" value="UniProtKB-UniRule"/>
</dbReference>
<dbReference type="GO" id="GO:0006089">
    <property type="term" value="P:lactate metabolic process"/>
    <property type="evidence" value="ECO:0007669"/>
    <property type="project" value="TreeGrafter"/>
</dbReference>
<dbReference type="GO" id="GO:0006099">
    <property type="term" value="P:tricarboxylic acid cycle"/>
    <property type="evidence" value="ECO:0007669"/>
    <property type="project" value="UniProtKB-UniRule"/>
</dbReference>
<dbReference type="CDD" id="cd01339">
    <property type="entry name" value="LDH-like_MDH"/>
    <property type="match status" value="1"/>
</dbReference>
<dbReference type="FunFam" id="3.40.50.720:FF:000018">
    <property type="entry name" value="Malate dehydrogenase"/>
    <property type="match status" value="1"/>
</dbReference>
<dbReference type="FunFam" id="3.90.110.10:FF:000004">
    <property type="entry name" value="Malate dehydrogenase"/>
    <property type="match status" value="1"/>
</dbReference>
<dbReference type="Gene3D" id="3.90.110.10">
    <property type="entry name" value="Lactate dehydrogenase/glycoside hydrolase, family 4, C-terminal"/>
    <property type="match status" value="1"/>
</dbReference>
<dbReference type="Gene3D" id="3.40.50.720">
    <property type="entry name" value="NAD(P)-binding Rossmann-like Domain"/>
    <property type="match status" value="1"/>
</dbReference>
<dbReference type="HAMAP" id="MF_00487">
    <property type="entry name" value="Malate_dehydrog_3"/>
    <property type="match status" value="1"/>
</dbReference>
<dbReference type="InterPro" id="IPR001557">
    <property type="entry name" value="L-lactate/malate_DH"/>
</dbReference>
<dbReference type="InterPro" id="IPR022383">
    <property type="entry name" value="Lactate/malate_DH_C"/>
</dbReference>
<dbReference type="InterPro" id="IPR001236">
    <property type="entry name" value="Lactate/malate_DH_N"/>
</dbReference>
<dbReference type="InterPro" id="IPR015955">
    <property type="entry name" value="Lactate_DH/Glyco_Ohase_4_C"/>
</dbReference>
<dbReference type="InterPro" id="IPR011275">
    <property type="entry name" value="Malate_DH_type3"/>
</dbReference>
<dbReference type="InterPro" id="IPR036291">
    <property type="entry name" value="NAD(P)-bd_dom_sf"/>
</dbReference>
<dbReference type="NCBIfam" id="TIGR01763">
    <property type="entry name" value="MalateDH_bact"/>
    <property type="match status" value="1"/>
</dbReference>
<dbReference type="NCBIfam" id="NF004863">
    <property type="entry name" value="PRK06223.1"/>
    <property type="match status" value="1"/>
</dbReference>
<dbReference type="PANTHER" id="PTHR43128">
    <property type="entry name" value="L-2-HYDROXYCARBOXYLATE DEHYDROGENASE (NAD(P)(+))"/>
    <property type="match status" value="1"/>
</dbReference>
<dbReference type="PANTHER" id="PTHR43128:SF16">
    <property type="entry name" value="L-LACTATE DEHYDROGENASE"/>
    <property type="match status" value="1"/>
</dbReference>
<dbReference type="Pfam" id="PF02866">
    <property type="entry name" value="Ldh_1_C"/>
    <property type="match status" value="1"/>
</dbReference>
<dbReference type="Pfam" id="PF00056">
    <property type="entry name" value="Ldh_1_N"/>
    <property type="match status" value="1"/>
</dbReference>
<dbReference type="PIRSF" id="PIRSF000102">
    <property type="entry name" value="Lac_mal_DH"/>
    <property type="match status" value="1"/>
</dbReference>
<dbReference type="PRINTS" id="PR00086">
    <property type="entry name" value="LLDHDRGNASE"/>
</dbReference>
<dbReference type="SUPFAM" id="SSF56327">
    <property type="entry name" value="LDH C-terminal domain-like"/>
    <property type="match status" value="1"/>
</dbReference>
<dbReference type="SUPFAM" id="SSF51735">
    <property type="entry name" value="NAD(P)-binding Rossmann-fold domains"/>
    <property type="match status" value="1"/>
</dbReference>
<keyword id="KW-0520">NAD</keyword>
<keyword id="KW-0560">Oxidoreductase</keyword>
<keyword id="KW-0597">Phosphoprotein</keyword>
<keyword id="KW-0816">Tricarboxylic acid cycle</keyword>
<comment type="function">
    <text evidence="1">Catalyzes the reversible oxidation of malate to oxaloacetate.</text>
</comment>
<comment type="catalytic activity">
    <reaction evidence="1">
        <text>(S)-malate + NAD(+) = oxaloacetate + NADH + H(+)</text>
        <dbReference type="Rhea" id="RHEA:21432"/>
        <dbReference type="ChEBI" id="CHEBI:15378"/>
        <dbReference type="ChEBI" id="CHEBI:15589"/>
        <dbReference type="ChEBI" id="CHEBI:16452"/>
        <dbReference type="ChEBI" id="CHEBI:57540"/>
        <dbReference type="ChEBI" id="CHEBI:57945"/>
        <dbReference type="EC" id="1.1.1.37"/>
    </reaction>
</comment>
<comment type="similarity">
    <text evidence="1">Belongs to the LDH/MDH superfamily. MDH type 3 family.</text>
</comment>
<evidence type="ECO:0000255" key="1">
    <source>
        <dbReference type="HAMAP-Rule" id="MF_00487"/>
    </source>
</evidence>
<protein>
    <recommendedName>
        <fullName evidence="1">Malate dehydrogenase</fullName>
        <ecNumber evidence="1">1.1.1.37</ecNumber>
    </recommendedName>
</protein>
<reference key="1">
    <citation type="journal article" date="2008" name="Chem. Biol. Interact.">
        <title>Extending the Bacillus cereus group genomics to putative food-borne pathogens of different toxicity.</title>
        <authorList>
            <person name="Lapidus A."/>
            <person name="Goltsman E."/>
            <person name="Auger S."/>
            <person name="Galleron N."/>
            <person name="Segurens B."/>
            <person name="Dossat C."/>
            <person name="Land M.L."/>
            <person name="Broussolle V."/>
            <person name="Brillard J."/>
            <person name="Guinebretiere M.-H."/>
            <person name="Sanchis V."/>
            <person name="Nguen-the C."/>
            <person name="Lereclus D."/>
            <person name="Richardson P."/>
            <person name="Wincker P."/>
            <person name="Weissenbach J."/>
            <person name="Ehrlich S.D."/>
            <person name="Sorokin A."/>
        </authorList>
    </citation>
    <scope>NUCLEOTIDE SEQUENCE [LARGE SCALE GENOMIC DNA]</scope>
    <source>
        <strain>KBAB4</strain>
    </source>
</reference>
<accession>A9VJQ4</accession>
<organism>
    <name type="scientific">Bacillus mycoides (strain KBAB4)</name>
    <name type="common">Bacillus weihenstephanensis</name>
    <dbReference type="NCBI Taxonomy" id="315730"/>
    <lineage>
        <taxon>Bacteria</taxon>
        <taxon>Bacillati</taxon>
        <taxon>Bacillota</taxon>
        <taxon>Bacilli</taxon>
        <taxon>Bacillales</taxon>
        <taxon>Bacillaceae</taxon>
        <taxon>Bacillus</taxon>
        <taxon>Bacillus cereus group</taxon>
    </lineage>
</organism>
<feature type="chain" id="PRO_1000126125" description="Malate dehydrogenase">
    <location>
        <begin position="1"/>
        <end position="312"/>
    </location>
</feature>
<feature type="active site" description="Proton acceptor" evidence="1">
    <location>
        <position position="180"/>
    </location>
</feature>
<feature type="binding site" evidence="1">
    <location>
        <begin position="12"/>
        <end position="17"/>
    </location>
    <ligand>
        <name>NAD(+)</name>
        <dbReference type="ChEBI" id="CHEBI:57540"/>
    </ligand>
</feature>
<feature type="binding site" evidence="1">
    <location>
        <position position="36"/>
    </location>
    <ligand>
        <name>NAD(+)</name>
        <dbReference type="ChEBI" id="CHEBI:57540"/>
    </ligand>
</feature>
<feature type="binding site" evidence="1">
    <location>
        <position position="87"/>
    </location>
    <ligand>
        <name>substrate</name>
    </ligand>
</feature>
<feature type="binding site" evidence="1">
    <location>
        <position position="93"/>
    </location>
    <ligand>
        <name>substrate</name>
    </ligand>
</feature>
<feature type="binding site" evidence="1">
    <location>
        <position position="100"/>
    </location>
    <ligand>
        <name>NAD(+)</name>
        <dbReference type="ChEBI" id="CHEBI:57540"/>
    </ligand>
</feature>
<feature type="binding site" evidence="1">
    <location>
        <begin position="123"/>
        <end position="125"/>
    </location>
    <ligand>
        <name>NAD(+)</name>
        <dbReference type="ChEBI" id="CHEBI:57540"/>
    </ligand>
</feature>
<feature type="binding site" evidence="1">
    <location>
        <position position="125"/>
    </location>
    <ligand>
        <name>substrate</name>
    </ligand>
</feature>
<feature type="binding site" evidence="1">
    <location>
        <position position="156"/>
    </location>
    <ligand>
        <name>substrate</name>
    </ligand>
</feature>
<feature type="modified residue" description="Phosphoserine" evidence="1">
    <location>
        <position position="149"/>
    </location>
</feature>
<proteinExistence type="inferred from homology"/>